<evidence type="ECO:0000255" key="1">
    <source>
        <dbReference type="PROSITE-ProRule" id="PRU00435"/>
    </source>
</evidence>
<evidence type="ECO:0000269" key="2">
    <source>
    </source>
</evidence>
<evidence type="ECO:0000269" key="3">
    <source>
    </source>
</evidence>
<evidence type="ECO:0007829" key="4">
    <source>
        <dbReference type="PDB" id="5HS7"/>
    </source>
</evidence>
<protein>
    <recommendedName>
        <fullName>HTH-type transcriptional regulator YodB</fullName>
    </recommendedName>
</protein>
<dbReference type="EMBL" id="AF006665">
    <property type="protein sequence ID" value="AAB81174.1"/>
    <property type="molecule type" value="Genomic_DNA"/>
</dbReference>
<dbReference type="EMBL" id="AF015775">
    <property type="protein sequence ID" value="AAB72060.1"/>
    <property type="molecule type" value="Genomic_DNA"/>
</dbReference>
<dbReference type="EMBL" id="AL009126">
    <property type="protein sequence ID" value="CAB13845.1"/>
    <property type="molecule type" value="Genomic_DNA"/>
</dbReference>
<dbReference type="PIR" id="G69902">
    <property type="entry name" value="G69902"/>
</dbReference>
<dbReference type="RefSeq" id="WP_004399427.1">
    <property type="nucleotide sequence ID" value="NZ_OZ025638.1"/>
</dbReference>
<dbReference type="PDB" id="5HS7">
    <property type="method" value="X-ray"/>
    <property type="resolution" value="1.70 A"/>
    <property type="chains" value="A/B=5-112"/>
</dbReference>
<dbReference type="PDB" id="5HS8">
    <property type="method" value="X-ray"/>
    <property type="resolution" value="2.00 A"/>
    <property type="chains" value="A=5-112"/>
</dbReference>
<dbReference type="PDB" id="5HS9">
    <property type="method" value="X-ray"/>
    <property type="resolution" value="2.10 A"/>
    <property type="chains" value="A/B=5-112"/>
</dbReference>
<dbReference type="PDBsum" id="5HS7"/>
<dbReference type="PDBsum" id="5HS8"/>
<dbReference type="PDBsum" id="5HS9"/>
<dbReference type="SMR" id="O34844"/>
<dbReference type="FunCoup" id="O34844">
    <property type="interactions" value="6"/>
</dbReference>
<dbReference type="STRING" id="224308.BSU19540"/>
<dbReference type="PaxDb" id="224308-BSU19540"/>
<dbReference type="EnsemblBacteria" id="CAB13845">
    <property type="protein sequence ID" value="CAB13845"/>
    <property type="gene ID" value="BSU_19540"/>
</dbReference>
<dbReference type="GeneID" id="11239814"/>
<dbReference type="GeneID" id="939449"/>
<dbReference type="KEGG" id="bsu:BSU19540"/>
<dbReference type="PATRIC" id="fig|224308.179.peg.2136"/>
<dbReference type="eggNOG" id="COG1733">
    <property type="taxonomic scope" value="Bacteria"/>
</dbReference>
<dbReference type="InParanoid" id="O34844"/>
<dbReference type="OrthoDB" id="9800966at2"/>
<dbReference type="PhylomeDB" id="O34844"/>
<dbReference type="BioCyc" id="BSUB:BSU19540-MONOMER"/>
<dbReference type="PRO" id="PR:O34844"/>
<dbReference type="Proteomes" id="UP000001570">
    <property type="component" value="Chromosome"/>
</dbReference>
<dbReference type="CollecTF" id="EXPREG_000006a0"/>
<dbReference type="GO" id="GO:0032993">
    <property type="term" value="C:protein-DNA complex"/>
    <property type="evidence" value="ECO:0000315"/>
    <property type="project" value="CollecTF"/>
</dbReference>
<dbReference type="GO" id="GO:0003700">
    <property type="term" value="F:DNA-binding transcription factor activity"/>
    <property type="evidence" value="ECO:0000318"/>
    <property type="project" value="GO_Central"/>
</dbReference>
<dbReference type="GO" id="GO:0001217">
    <property type="term" value="F:DNA-binding transcription repressor activity"/>
    <property type="evidence" value="ECO:0000315"/>
    <property type="project" value="CollecTF"/>
</dbReference>
<dbReference type="GO" id="GO:0000976">
    <property type="term" value="F:transcription cis-regulatory region binding"/>
    <property type="evidence" value="ECO:0000315"/>
    <property type="project" value="CollecTF"/>
</dbReference>
<dbReference type="GO" id="GO:0045892">
    <property type="term" value="P:negative regulation of DNA-templated transcription"/>
    <property type="evidence" value="ECO:0000314"/>
    <property type="project" value="CollecTF"/>
</dbReference>
<dbReference type="GO" id="GO:0006355">
    <property type="term" value="P:regulation of DNA-templated transcription"/>
    <property type="evidence" value="ECO:0000318"/>
    <property type="project" value="GO_Central"/>
</dbReference>
<dbReference type="CDD" id="cd00090">
    <property type="entry name" value="HTH_ARSR"/>
    <property type="match status" value="1"/>
</dbReference>
<dbReference type="Gene3D" id="1.10.10.10">
    <property type="entry name" value="Winged helix-like DNA-binding domain superfamily/Winged helix DNA-binding domain"/>
    <property type="match status" value="1"/>
</dbReference>
<dbReference type="InterPro" id="IPR011991">
    <property type="entry name" value="ArsR-like_HTH"/>
</dbReference>
<dbReference type="InterPro" id="IPR002577">
    <property type="entry name" value="HTH_HxlR"/>
</dbReference>
<dbReference type="InterPro" id="IPR036388">
    <property type="entry name" value="WH-like_DNA-bd_sf"/>
</dbReference>
<dbReference type="InterPro" id="IPR036390">
    <property type="entry name" value="WH_DNA-bd_sf"/>
</dbReference>
<dbReference type="PANTHER" id="PTHR33204:SF37">
    <property type="entry name" value="HTH-TYPE TRANSCRIPTIONAL REGULATOR YODB"/>
    <property type="match status" value="1"/>
</dbReference>
<dbReference type="PANTHER" id="PTHR33204">
    <property type="entry name" value="TRANSCRIPTIONAL REGULATOR, MARR FAMILY"/>
    <property type="match status" value="1"/>
</dbReference>
<dbReference type="Pfam" id="PF01638">
    <property type="entry name" value="HxlR"/>
    <property type="match status" value="1"/>
</dbReference>
<dbReference type="SUPFAM" id="SSF46785">
    <property type="entry name" value="Winged helix' DNA-binding domain"/>
    <property type="match status" value="1"/>
</dbReference>
<dbReference type="PROSITE" id="PS51118">
    <property type="entry name" value="HTH_HXLR"/>
    <property type="match status" value="1"/>
</dbReference>
<keyword id="KW-0002">3D-structure</keyword>
<keyword id="KW-0010">Activator</keyword>
<keyword id="KW-0238">DNA-binding</keyword>
<keyword id="KW-1185">Reference proteome</keyword>
<keyword id="KW-0678">Repressor</keyword>
<keyword id="KW-0804">Transcription</keyword>
<keyword id="KW-0805">Transcription regulation</keyword>
<proteinExistence type="evidence at protein level"/>
<comment type="function">
    <text evidence="3">Negatively regulates yodC and azoR1 which may contribute to the degradation of aromatic compounds. Probably positively regulates the catechol-specific transcription of mhqNOP, mhqED, and mhqA.</text>
</comment>
<comment type="induction">
    <text evidence="2 3">Repressed by 2-methylhydroquinone (2-MHQ), diamide and catechol stress.</text>
</comment>
<accession>O34844</accession>
<gene>
    <name type="primary">yodB</name>
    <name type="ordered locus">BSU19540</name>
</gene>
<reference key="1">
    <citation type="journal article" date="1998" name="DNA Res.">
        <title>Sequence analysis of the Bacillus subtilis 168 chromosome region between the sspC and odhA loci (184 degrees-180 degrees).</title>
        <authorList>
            <person name="Ghim S.-Y."/>
            <person name="Choi S.-K."/>
            <person name="Shin B.-S."/>
            <person name="Jeong Y.-M."/>
            <person name="Sorokin A."/>
            <person name="Ehrlich S.D."/>
            <person name="Park S.-H."/>
        </authorList>
    </citation>
    <scope>NUCLEOTIDE SEQUENCE [GENOMIC DNA]</scope>
    <source>
        <strain>168</strain>
    </source>
</reference>
<reference key="2">
    <citation type="journal article" date="1997" name="Nature">
        <title>The complete genome sequence of the Gram-positive bacterium Bacillus subtilis.</title>
        <authorList>
            <person name="Kunst F."/>
            <person name="Ogasawara N."/>
            <person name="Moszer I."/>
            <person name="Albertini A.M."/>
            <person name="Alloni G."/>
            <person name="Azevedo V."/>
            <person name="Bertero M.G."/>
            <person name="Bessieres P."/>
            <person name="Bolotin A."/>
            <person name="Borchert S."/>
            <person name="Borriss R."/>
            <person name="Boursier L."/>
            <person name="Brans A."/>
            <person name="Braun M."/>
            <person name="Brignell S.C."/>
            <person name="Bron S."/>
            <person name="Brouillet S."/>
            <person name="Bruschi C.V."/>
            <person name="Caldwell B."/>
            <person name="Capuano V."/>
            <person name="Carter N.M."/>
            <person name="Choi S.-K."/>
            <person name="Codani J.-J."/>
            <person name="Connerton I.F."/>
            <person name="Cummings N.J."/>
            <person name="Daniel R.A."/>
            <person name="Denizot F."/>
            <person name="Devine K.M."/>
            <person name="Duesterhoeft A."/>
            <person name="Ehrlich S.D."/>
            <person name="Emmerson P.T."/>
            <person name="Entian K.-D."/>
            <person name="Errington J."/>
            <person name="Fabret C."/>
            <person name="Ferrari E."/>
            <person name="Foulger D."/>
            <person name="Fritz C."/>
            <person name="Fujita M."/>
            <person name="Fujita Y."/>
            <person name="Fuma S."/>
            <person name="Galizzi A."/>
            <person name="Galleron N."/>
            <person name="Ghim S.-Y."/>
            <person name="Glaser P."/>
            <person name="Goffeau A."/>
            <person name="Golightly E.J."/>
            <person name="Grandi G."/>
            <person name="Guiseppi G."/>
            <person name="Guy B.J."/>
            <person name="Haga K."/>
            <person name="Haiech J."/>
            <person name="Harwood C.R."/>
            <person name="Henaut A."/>
            <person name="Hilbert H."/>
            <person name="Holsappel S."/>
            <person name="Hosono S."/>
            <person name="Hullo M.-F."/>
            <person name="Itaya M."/>
            <person name="Jones L.-M."/>
            <person name="Joris B."/>
            <person name="Karamata D."/>
            <person name="Kasahara Y."/>
            <person name="Klaerr-Blanchard M."/>
            <person name="Klein C."/>
            <person name="Kobayashi Y."/>
            <person name="Koetter P."/>
            <person name="Koningstein G."/>
            <person name="Krogh S."/>
            <person name="Kumano M."/>
            <person name="Kurita K."/>
            <person name="Lapidus A."/>
            <person name="Lardinois S."/>
            <person name="Lauber J."/>
            <person name="Lazarevic V."/>
            <person name="Lee S.-M."/>
            <person name="Levine A."/>
            <person name="Liu H."/>
            <person name="Masuda S."/>
            <person name="Mauel C."/>
            <person name="Medigue C."/>
            <person name="Medina N."/>
            <person name="Mellado R.P."/>
            <person name="Mizuno M."/>
            <person name="Moestl D."/>
            <person name="Nakai S."/>
            <person name="Noback M."/>
            <person name="Noone D."/>
            <person name="O'Reilly M."/>
            <person name="Ogawa K."/>
            <person name="Ogiwara A."/>
            <person name="Oudega B."/>
            <person name="Park S.-H."/>
            <person name="Parro V."/>
            <person name="Pohl T.M."/>
            <person name="Portetelle D."/>
            <person name="Porwollik S."/>
            <person name="Prescott A.M."/>
            <person name="Presecan E."/>
            <person name="Pujic P."/>
            <person name="Purnelle B."/>
            <person name="Rapoport G."/>
            <person name="Rey M."/>
            <person name="Reynolds S."/>
            <person name="Rieger M."/>
            <person name="Rivolta C."/>
            <person name="Rocha E."/>
            <person name="Roche B."/>
            <person name="Rose M."/>
            <person name="Sadaie Y."/>
            <person name="Sato T."/>
            <person name="Scanlan E."/>
            <person name="Schleich S."/>
            <person name="Schroeter R."/>
            <person name="Scoffone F."/>
            <person name="Sekiguchi J."/>
            <person name="Sekowska A."/>
            <person name="Seror S.J."/>
            <person name="Serror P."/>
            <person name="Shin B.-S."/>
            <person name="Soldo B."/>
            <person name="Sorokin A."/>
            <person name="Tacconi E."/>
            <person name="Takagi T."/>
            <person name="Takahashi H."/>
            <person name="Takemaru K."/>
            <person name="Takeuchi M."/>
            <person name="Tamakoshi A."/>
            <person name="Tanaka T."/>
            <person name="Terpstra P."/>
            <person name="Tognoni A."/>
            <person name="Tosato V."/>
            <person name="Uchiyama S."/>
            <person name="Vandenbol M."/>
            <person name="Vannier F."/>
            <person name="Vassarotti A."/>
            <person name="Viari A."/>
            <person name="Wambutt R."/>
            <person name="Wedler E."/>
            <person name="Wedler H."/>
            <person name="Weitzenegger T."/>
            <person name="Winters P."/>
            <person name="Wipat A."/>
            <person name="Yamamoto H."/>
            <person name="Yamane K."/>
            <person name="Yasumoto K."/>
            <person name="Yata K."/>
            <person name="Yoshida K."/>
            <person name="Yoshikawa H.-F."/>
            <person name="Zumstein E."/>
            <person name="Yoshikawa H."/>
            <person name="Danchin A."/>
        </authorList>
    </citation>
    <scope>NUCLEOTIDE SEQUENCE [LARGE SCALE GENOMIC DNA]</scope>
    <source>
        <strain>168</strain>
    </source>
</reference>
<reference key="3">
    <citation type="journal article" date="2007" name="Proteomics">
        <title>Transcriptome and proteome analyses in response to 2-methylhydroquinone and 6-brom-2-vinyl-chroman-4-on reveal different degradation systems involved in the catabolism of aromatic compounds in Bacillus subtilis.</title>
        <authorList>
            <person name="Nguyen V.D."/>
            <person name="Wolf C."/>
            <person name="Maeder U."/>
            <person name="Lalk M."/>
            <person name="Langer P."/>
            <person name="Lindequist U."/>
            <person name="Hecker M."/>
            <person name="Antelmann H."/>
        </authorList>
    </citation>
    <scope>INDUCTION</scope>
    <source>
        <strain>168</strain>
    </source>
</reference>
<reference key="4">
    <citation type="journal article" date="2008" name="Mol. Microbiol.">
        <title>Regulation of quinone detoxification by the thiol stress sensing DUF24/MarR-like repressor, YodB in Bacillus subtilis.</title>
        <authorList>
            <person name="Leelakriangsak M."/>
            <person name="Huyen N.T.T."/>
            <person name="Toewe S."/>
            <person name="van Duy N."/>
            <person name="Becher D."/>
            <person name="Hecker M."/>
            <person name="Antelmann H."/>
            <person name="Zuber P."/>
        </authorList>
    </citation>
    <scope>FUNCTION</scope>
    <scope>INDUCTION</scope>
    <source>
        <strain>168</strain>
    </source>
</reference>
<organism>
    <name type="scientific">Bacillus subtilis (strain 168)</name>
    <dbReference type="NCBI Taxonomy" id="224308"/>
    <lineage>
        <taxon>Bacteria</taxon>
        <taxon>Bacillati</taxon>
        <taxon>Bacillota</taxon>
        <taxon>Bacilli</taxon>
        <taxon>Bacillales</taxon>
        <taxon>Bacillaceae</taxon>
        <taxon>Bacillus</taxon>
    </lineage>
</organism>
<name>YODB_BACSU</name>
<feature type="chain" id="PRO_0000148887" description="HTH-type transcriptional regulator YodB">
    <location>
        <begin position="1"/>
        <end position="112"/>
    </location>
</feature>
<feature type="domain" description="HTH hxlR-type" evidence="1">
    <location>
        <begin position="6"/>
        <end position="105"/>
    </location>
</feature>
<feature type="helix" evidence="4">
    <location>
        <begin position="7"/>
        <end position="17"/>
    </location>
</feature>
<feature type="helix" evidence="4">
    <location>
        <begin position="21"/>
        <end position="28"/>
    </location>
</feature>
<feature type="helix" evidence="4">
    <location>
        <begin position="35"/>
        <end position="41"/>
    </location>
</feature>
<feature type="helix" evidence="4">
    <location>
        <begin position="47"/>
        <end position="59"/>
    </location>
</feature>
<feature type="strand" evidence="4">
    <location>
        <begin position="62"/>
        <end position="68"/>
    </location>
</feature>
<feature type="strand" evidence="4">
    <location>
        <begin position="70"/>
        <end position="72"/>
    </location>
</feature>
<feature type="strand" evidence="4">
    <location>
        <begin position="74"/>
        <end position="79"/>
    </location>
</feature>
<feature type="helix" evidence="4">
    <location>
        <begin position="81"/>
        <end position="84"/>
    </location>
</feature>
<feature type="helix" evidence="4">
    <location>
        <begin position="87"/>
        <end position="100"/>
    </location>
</feature>
<sequence length="112" mass="12846">MGNTMCPKMESAFSLLGKRWNGLIIHVLMDGPKRFKEITETIPMISQKMLAERLKELEQNEIVERQVLPETPVKVIYTLTEKGTALQAVFQEMQAWADQFCEPGDTVCEEEK</sequence>